<dbReference type="EC" id="6.3.4.4" evidence="1"/>
<dbReference type="EMBL" id="CP001113">
    <property type="protein sequence ID" value="ACF63124.1"/>
    <property type="molecule type" value="Genomic_DNA"/>
</dbReference>
<dbReference type="RefSeq" id="WP_000527960.1">
    <property type="nucleotide sequence ID" value="NZ_CCMR01000003.1"/>
</dbReference>
<dbReference type="SMR" id="B4T2S2"/>
<dbReference type="KEGG" id="see:SNSL254_A4727"/>
<dbReference type="HOGENOM" id="CLU_029848_0_0_6"/>
<dbReference type="UniPathway" id="UPA00075">
    <property type="reaction ID" value="UER00335"/>
</dbReference>
<dbReference type="Proteomes" id="UP000008824">
    <property type="component" value="Chromosome"/>
</dbReference>
<dbReference type="GO" id="GO:0005737">
    <property type="term" value="C:cytoplasm"/>
    <property type="evidence" value="ECO:0007669"/>
    <property type="project" value="UniProtKB-SubCell"/>
</dbReference>
<dbReference type="GO" id="GO:0004019">
    <property type="term" value="F:adenylosuccinate synthase activity"/>
    <property type="evidence" value="ECO:0007669"/>
    <property type="project" value="UniProtKB-UniRule"/>
</dbReference>
<dbReference type="GO" id="GO:0005525">
    <property type="term" value="F:GTP binding"/>
    <property type="evidence" value="ECO:0007669"/>
    <property type="project" value="UniProtKB-UniRule"/>
</dbReference>
<dbReference type="GO" id="GO:0000287">
    <property type="term" value="F:magnesium ion binding"/>
    <property type="evidence" value="ECO:0007669"/>
    <property type="project" value="UniProtKB-UniRule"/>
</dbReference>
<dbReference type="GO" id="GO:0044208">
    <property type="term" value="P:'de novo' AMP biosynthetic process"/>
    <property type="evidence" value="ECO:0007669"/>
    <property type="project" value="UniProtKB-UniRule"/>
</dbReference>
<dbReference type="GO" id="GO:0046040">
    <property type="term" value="P:IMP metabolic process"/>
    <property type="evidence" value="ECO:0007669"/>
    <property type="project" value="TreeGrafter"/>
</dbReference>
<dbReference type="CDD" id="cd03108">
    <property type="entry name" value="AdSS"/>
    <property type="match status" value="1"/>
</dbReference>
<dbReference type="FunFam" id="1.10.300.10:FF:000001">
    <property type="entry name" value="Adenylosuccinate synthetase"/>
    <property type="match status" value="1"/>
</dbReference>
<dbReference type="FunFam" id="3.90.170.10:FF:000001">
    <property type="entry name" value="Adenylosuccinate synthetase"/>
    <property type="match status" value="1"/>
</dbReference>
<dbReference type="Gene3D" id="3.40.440.10">
    <property type="entry name" value="Adenylosuccinate Synthetase, subunit A, domain 1"/>
    <property type="match status" value="1"/>
</dbReference>
<dbReference type="Gene3D" id="1.10.300.10">
    <property type="entry name" value="Adenylosuccinate Synthetase, subunit A, domain 2"/>
    <property type="match status" value="1"/>
</dbReference>
<dbReference type="Gene3D" id="3.90.170.10">
    <property type="entry name" value="Adenylosuccinate Synthetase, subunit A, domain 3"/>
    <property type="match status" value="1"/>
</dbReference>
<dbReference type="HAMAP" id="MF_00011">
    <property type="entry name" value="Adenylosucc_synth"/>
    <property type="match status" value="1"/>
</dbReference>
<dbReference type="InterPro" id="IPR018220">
    <property type="entry name" value="Adenylosuccin_syn_GTP-bd"/>
</dbReference>
<dbReference type="InterPro" id="IPR033128">
    <property type="entry name" value="Adenylosuccin_syn_Lys_AS"/>
</dbReference>
<dbReference type="InterPro" id="IPR042109">
    <property type="entry name" value="Adenylosuccinate_synth_dom1"/>
</dbReference>
<dbReference type="InterPro" id="IPR042110">
    <property type="entry name" value="Adenylosuccinate_synth_dom2"/>
</dbReference>
<dbReference type="InterPro" id="IPR042111">
    <property type="entry name" value="Adenylosuccinate_synth_dom3"/>
</dbReference>
<dbReference type="InterPro" id="IPR001114">
    <property type="entry name" value="Adenylosuccinate_synthetase"/>
</dbReference>
<dbReference type="InterPro" id="IPR027417">
    <property type="entry name" value="P-loop_NTPase"/>
</dbReference>
<dbReference type="NCBIfam" id="NF002223">
    <property type="entry name" value="PRK01117.1"/>
    <property type="match status" value="1"/>
</dbReference>
<dbReference type="NCBIfam" id="TIGR00184">
    <property type="entry name" value="purA"/>
    <property type="match status" value="1"/>
</dbReference>
<dbReference type="PANTHER" id="PTHR11846">
    <property type="entry name" value="ADENYLOSUCCINATE SYNTHETASE"/>
    <property type="match status" value="1"/>
</dbReference>
<dbReference type="PANTHER" id="PTHR11846:SF0">
    <property type="entry name" value="ADENYLOSUCCINATE SYNTHETASE"/>
    <property type="match status" value="1"/>
</dbReference>
<dbReference type="Pfam" id="PF00709">
    <property type="entry name" value="Adenylsucc_synt"/>
    <property type="match status" value="1"/>
</dbReference>
<dbReference type="SMART" id="SM00788">
    <property type="entry name" value="Adenylsucc_synt"/>
    <property type="match status" value="1"/>
</dbReference>
<dbReference type="SUPFAM" id="SSF52540">
    <property type="entry name" value="P-loop containing nucleoside triphosphate hydrolases"/>
    <property type="match status" value="1"/>
</dbReference>
<dbReference type="PROSITE" id="PS01266">
    <property type="entry name" value="ADENYLOSUCCIN_SYN_1"/>
    <property type="match status" value="1"/>
</dbReference>
<dbReference type="PROSITE" id="PS00513">
    <property type="entry name" value="ADENYLOSUCCIN_SYN_2"/>
    <property type="match status" value="1"/>
</dbReference>
<organism>
    <name type="scientific">Salmonella newport (strain SL254)</name>
    <dbReference type="NCBI Taxonomy" id="423368"/>
    <lineage>
        <taxon>Bacteria</taxon>
        <taxon>Pseudomonadati</taxon>
        <taxon>Pseudomonadota</taxon>
        <taxon>Gammaproteobacteria</taxon>
        <taxon>Enterobacterales</taxon>
        <taxon>Enterobacteriaceae</taxon>
        <taxon>Salmonella</taxon>
    </lineage>
</organism>
<accession>B4T2S2</accession>
<name>PURA_SALNS</name>
<feature type="chain" id="PRO_1000089337" description="Adenylosuccinate synthetase">
    <location>
        <begin position="1"/>
        <end position="432"/>
    </location>
</feature>
<feature type="active site" description="Proton acceptor" evidence="1">
    <location>
        <position position="14"/>
    </location>
</feature>
<feature type="active site" description="Proton donor" evidence="1">
    <location>
        <position position="42"/>
    </location>
</feature>
<feature type="binding site" evidence="1">
    <location>
        <begin position="13"/>
        <end position="19"/>
    </location>
    <ligand>
        <name>GTP</name>
        <dbReference type="ChEBI" id="CHEBI:37565"/>
    </ligand>
</feature>
<feature type="binding site" description="in other chain" evidence="1">
    <location>
        <begin position="14"/>
        <end position="17"/>
    </location>
    <ligand>
        <name>IMP</name>
        <dbReference type="ChEBI" id="CHEBI:58053"/>
        <note>ligand shared between dimeric partners</note>
    </ligand>
</feature>
<feature type="binding site" evidence="1">
    <location>
        <position position="14"/>
    </location>
    <ligand>
        <name>Mg(2+)</name>
        <dbReference type="ChEBI" id="CHEBI:18420"/>
    </ligand>
</feature>
<feature type="binding site" description="in other chain" evidence="1">
    <location>
        <begin position="39"/>
        <end position="42"/>
    </location>
    <ligand>
        <name>IMP</name>
        <dbReference type="ChEBI" id="CHEBI:58053"/>
        <note>ligand shared between dimeric partners</note>
    </ligand>
</feature>
<feature type="binding site" evidence="1">
    <location>
        <begin position="41"/>
        <end position="43"/>
    </location>
    <ligand>
        <name>GTP</name>
        <dbReference type="ChEBI" id="CHEBI:37565"/>
    </ligand>
</feature>
<feature type="binding site" evidence="1">
    <location>
        <position position="41"/>
    </location>
    <ligand>
        <name>Mg(2+)</name>
        <dbReference type="ChEBI" id="CHEBI:18420"/>
    </ligand>
</feature>
<feature type="binding site" description="in other chain" evidence="1">
    <location>
        <position position="130"/>
    </location>
    <ligand>
        <name>IMP</name>
        <dbReference type="ChEBI" id="CHEBI:58053"/>
        <note>ligand shared between dimeric partners</note>
    </ligand>
</feature>
<feature type="binding site" evidence="1">
    <location>
        <position position="144"/>
    </location>
    <ligand>
        <name>IMP</name>
        <dbReference type="ChEBI" id="CHEBI:58053"/>
        <note>ligand shared between dimeric partners</note>
    </ligand>
</feature>
<feature type="binding site" description="in other chain" evidence="1">
    <location>
        <position position="225"/>
    </location>
    <ligand>
        <name>IMP</name>
        <dbReference type="ChEBI" id="CHEBI:58053"/>
        <note>ligand shared between dimeric partners</note>
    </ligand>
</feature>
<feature type="binding site" description="in other chain" evidence="1">
    <location>
        <position position="240"/>
    </location>
    <ligand>
        <name>IMP</name>
        <dbReference type="ChEBI" id="CHEBI:58053"/>
        <note>ligand shared between dimeric partners</note>
    </ligand>
</feature>
<feature type="binding site" evidence="1">
    <location>
        <begin position="300"/>
        <end position="306"/>
    </location>
    <ligand>
        <name>substrate</name>
    </ligand>
</feature>
<feature type="binding site" description="in other chain" evidence="1">
    <location>
        <position position="304"/>
    </location>
    <ligand>
        <name>IMP</name>
        <dbReference type="ChEBI" id="CHEBI:58053"/>
        <note>ligand shared between dimeric partners</note>
    </ligand>
</feature>
<feature type="binding site" evidence="1">
    <location>
        <position position="306"/>
    </location>
    <ligand>
        <name>GTP</name>
        <dbReference type="ChEBI" id="CHEBI:37565"/>
    </ligand>
</feature>
<feature type="binding site" evidence="1">
    <location>
        <begin position="332"/>
        <end position="334"/>
    </location>
    <ligand>
        <name>GTP</name>
        <dbReference type="ChEBI" id="CHEBI:37565"/>
    </ligand>
</feature>
<feature type="binding site" evidence="1">
    <location>
        <begin position="415"/>
        <end position="417"/>
    </location>
    <ligand>
        <name>GTP</name>
        <dbReference type="ChEBI" id="CHEBI:37565"/>
    </ligand>
</feature>
<reference key="1">
    <citation type="journal article" date="2011" name="J. Bacteriol.">
        <title>Comparative genomics of 28 Salmonella enterica isolates: evidence for CRISPR-mediated adaptive sublineage evolution.</title>
        <authorList>
            <person name="Fricke W.F."/>
            <person name="Mammel M.K."/>
            <person name="McDermott P.F."/>
            <person name="Tartera C."/>
            <person name="White D.G."/>
            <person name="Leclerc J.E."/>
            <person name="Ravel J."/>
            <person name="Cebula T.A."/>
        </authorList>
    </citation>
    <scope>NUCLEOTIDE SEQUENCE [LARGE SCALE GENOMIC DNA]</scope>
    <source>
        <strain>SL254</strain>
    </source>
</reference>
<comment type="function">
    <text evidence="1">Plays an important role in the de novo pathway of purine nucleotide biosynthesis. Catalyzes the first committed step in the biosynthesis of AMP from IMP.</text>
</comment>
<comment type="catalytic activity">
    <reaction evidence="1">
        <text>IMP + L-aspartate + GTP = N(6)-(1,2-dicarboxyethyl)-AMP + GDP + phosphate + 2 H(+)</text>
        <dbReference type="Rhea" id="RHEA:15753"/>
        <dbReference type="ChEBI" id="CHEBI:15378"/>
        <dbReference type="ChEBI" id="CHEBI:29991"/>
        <dbReference type="ChEBI" id="CHEBI:37565"/>
        <dbReference type="ChEBI" id="CHEBI:43474"/>
        <dbReference type="ChEBI" id="CHEBI:57567"/>
        <dbReference type="ChEBI" id="CHEBI:58053"/>
        <dbReference type="ChEBI" id="CHEBI:58189"/>
        <dbReference type="EC" id="6.3.4.4"/>
    </reaction>
</comment>
<comment type="cofactor">
    <cofactor evidence="1">
        <name>Mg(2+)</name>
        <dbReference type="ChEBI" id="CHEBI:18420"/>
    </cofactor>
    <text evidence="1">Binds 1 Mg(2+) ion per subunit.</text>
</comment>
<comment type="pathway">
    <text evidence="1">Purine metabolism; AMP biosynthesis via de novo pathway; AMP from IMP: step 1/2.</text>
</comment>
<comment type="subunit">
    <text evidence="1">Homodimer.</text>
</comment>
<comment type="subcellular location">
    <subcellularLocation>
        <location evidence="1">Cytoplasm</location>
    </subcellularLocation>
</comment>
<comment type="similarity">
    <text evidence="1">Belongs to the adenylosuccinate synthetase family.</text>
</comment>
<sequence>MGNNVVVLGTQWGDEGKGKIVDLLTERAKYVVRYQGGHNAGHTLVINGEKTVLHLIPSGILRENVTSIIGNGVVLSPAALMKEMKELEDRGIPVRERLLLSEACPLILDYHVALDNAREKARGAKAIGTTGRGIGPAYEDKVARRGLRVGDLFDKETFAEKLKEVMEYHNFQLVNYYKAEAVDYQKVLDDTMAVADILTSMVVDVSDLLDQARQRGDFVMFEGAQGTLLDIDHGTYPYVTSSNTTAGGVATGSGLGPRYVDYVLGILKAYSTRVGAGPFPTELFDETGEFLCKQGNEYGATTGRRRRTGWLDTVAVRRAVQLNSLSGFCLTKLDVLDGLKEVKLCVAYRMPDGREVTTTPLAADDWKGVEPIYETMPGWSESTFGVKDRSGLPQAALNYIKRIEELTGVPIDIISTGPDRTETMILRDPFDA</sequence>
<proteinExistence type="inferred from homology"/>
<protein>
    <recommendedName>
        <fullName evidence="1">Adenylosuccinate synthetase</fullName>
        <shortName evidence="1">AMPSase</shortName>
        <shortName evidence="1">AdSS</shortName>
        <ecNumber evidence="1">6.3.4.4</ecNumber>
    </recommendedName>
    <alternativeName>
        <fullName evidence="1">IMP--aspartate ligase</fullName>
    </alternativeName>
</protein>
<evidence type="ECO:0000255" key="1">
    <source>
        <dbReference type="HAMAP-Rule" id="MF_00011"/>
    </source>
</evidence>
<keyword id="KW-0963">Cytoplasm</keyword>
<keyword id="KW-0342">GTP-binding</keyword>
<keyword id="KW-0436">Ligase</keyword>
<keyword id="KW-0460">Magnesium</keyword>
<keyword id="KW-0479">Metal-binding</keyword>
<keyword id="KW-0547">Nucleotide-binding</keyword>
<keyword id="KW-0658">Purine biosynthesis</keyword>
<gene>
    <name evidence="1" type="primary">purA</name>
    <name type="ordered locus">SNSL254_A4727</name>
</gene>